<reference key="1">
    <citation type="journal article" date="2008" name="Antimicrob. Agents Chemother.">
        <title>Mutated response regulator graR is responsible for phenotypic conversion of Staphylococcus aureus from heterogeneous vancomycin-intermediate resistance to vancomycin-intermediate resistance.</title>
        <authorList>
            <person name="Neoh H.-M."/>
            <person name="Cui L."/>
            <person name="Yuzawa H."/>
            <person name="Takeuchi F."/>
            <person name="Matsuo M."/>
            <person name="Hiramatsu K."/>
        </authorList>
    </citation>
    <scope>NUCLEOTIDE SEQUENCE [LARGE SCALE GENOMIC DNA]</scope>
    <source>
        <strain>Mu3 / ATCC 700698</strain>
    </source>
</reference>
<organism>
    <name type="scientific">Staphylococcus aureus (strain Mu3 / ATCC 700698)</name>
    <dbReference type="NCBI Taxonomy" id="418127"/>
    <lineage>
        <taxon>Bacteria</taxon>
        <taxon>Bacillati</taxon>
        <taxon>Bacillota</taxon>
        <taxon>Bacilli</taxon>
        <taxon>Bacillales</taxon>
        <taxon>Staphylococcaceae</taxon>
        <taxon>Staphylococcus</taxon>
    </lineage>
</organism>
<proteinExistence type="inferred from homology"/>
<feature type="chain" id="PRO_1000014869" description="Large ribosomal subunit protein bL9">
    <location>
        <begin position="1"/>
        <end position="148"/>
    </location>
</feature>
<keyword id="KW-0687">Ribonucleoprotein</keyword>
<keyword id="KW-0689">Ribosomal protein</keyword>
<keyword id="KW-0694">RNA-binding</keyword>
<keyword id="KW-0699">rRNA-binding</keyword>
<gene>
    <name evidence="1" type="primary">rplI</name>
    <name type="ordered locus">SAHV_0015</name>
</gene>
<accession>A7WWQ0</accession>
<name>RL9_STAA1</name>
<sequence>MKVIFTQDVKGKGKKGEVKEVPVGYANNFLLKKNYAVEATPGNLKQLELQKKRAKQERQQEIEDAKALKETLSNIEVEVSAKTGEGGKLFGSVSTKQIAEALKAQHDIKIDKRKMDLPNGIHSLGYTNVPVKLDKEVEGTIRVHTVEQ</sequence>
<protein>
    <recommendedName>
        <fullName evidence="1">Large ribosomal subunit protein bL9</fullName>
    </recommendedName>
    <alternativeName>
        <fullName evidence="2">50S ribosomal protein L9</fullName>
    </alternativeName>
</protein>
<dbReference type="EMBL" id="AP009324">
    <property type="protein sequence ID" value="BAF76898.1"/>
    <property type="molecule type" value="Genomic_DNA"/>
</dbReference>
<dbReference type="RefSeq" id="WP_000864305.1">
    <property type="nucleotide sequence ID" value="NZ_CTYB01000035.1"/>
</dbReference>
<dbReference type="SMR" id="A7WWQ0"/>
<dbReference type="KEGG" id="saw:SAHV_0015"/>
<dbReference type="HOGENOM" id="CLU_078938_3_2_9"/>
<dbReference type="GO" id="GO:1990904">
    <property type="term" value="C:ribonucleoprotein complex"/>
    <property type="evidence" value="ECO:0007669"/>
    <property type="project" value="UniProtKB-KW"/>
</dbReference>
<dbReference type="GO" id="GO:0005840">
    <property type="term" value="C:ribosome"/>
    <property type="evidence" value="ECO:0007669"/>
    <property type="project" value="UniProtKB-KW"/>
</dbReference>
<dbReference type="GO" id="GO:0019843">
    <property type="term" value="F:rRNA binding"/>
    <property type="evidence" value="ECO:0007669"/>
    <property type="project" value="UniProtKB-UniRule"/>
</dbReference>
<dbReference type="GO" id="GO:0003735">
    <property type="term" value="F:structural constituent of ribosome"/>
    <property type="evidence" value="ECO:0007669"/>
    <property type="project" value="InterPro"/>
</dbReference>
<dbReference type="GO" id="GO:0006412">
    <property type="term" value="P:translation"/>
    <property type="evidence" value="ECO:0007669"/>
    <property type="project" value="UniProtKB-UniRule"/>
</dbReference>
<dbReference type="FunFam" id="3.10.430.100:FF:000002">
    <property type="entry name" value="50S ribosomal protein L9"/>
    <property type="match status" value="1"/>
</dbReference>
<dbReference type="FunFam" id="3.40.5.10:FF:000002">
    <property type="entry name" value="50S ribosomal protein L9"/>
    <property type="match status" value="1"/>
</dbReference>
<dbReference type="Gene3D" id="3.10.430.100">
    <property type="entry name" value="Ribosomal protein L9, C-terminal domain"/>
    <property type="match status" value="1"/>
</dbReference>
<dbReference type="Gene3D" id="3.40.5.10">
    <property type="entry name" value="Ribosomal protein L9, N-terminal domain"/>
    <property type="match status" value="1"/>
</dbReference>
<dbReference type="HAMAP" id="MF_00503">
    <property type="entry name" value="Ribosomal_bL9"/>
    <property type="match status" value="1"/>
</dbReference>
<dbReference type="InterPro" id="IPR000244">
    <property type="entry name" value="Ribosomal_bL9"/>
</dbReference>
<dbReference type="InterPro" id="IPR009027">
    <property type="entry name" value="Ribosomal_bL9/RNase_H1_N"/>
</dbReference>
<dbReference type="InterPro" id="IPR020594">
    <property type="entry name" value="Ribosomal_bL9_bac/chp"/>
</dbReference>
<dbReference type="InterPro" id="IPR020069">
    <property type="entry name" value="Ribosomal_bL9_C"/>
</dbReference>
<dbReference type="InterPro" id="IPR036791">
    <property type="entry name" value="Ribosomal_bL9_C_sf"/>
</dbReference>
<dbReference type="InterPro" id="IPR020070">
    <property type="entry name" value="Ribosomal_bL9_N"/>
</dbReference>
<dbReference type="InterPro" id="IPR036935">
    <property type="entry name" value="Ribosomal_bL9_N_sf"/>
</dbReference>
<dbReference type="NCBIfam" id="TIGR00158">
    <property type="entry name" value="L9"/>
    <property type="match status" value="1"/>
</dbReference>
<dbReference type="PANTHER" id="PTHR21368">
    <property type="entry name" value="50S RIBOSOMAL PROTEIN L9"/>
    <property type="match status" value="1"/>
</dbReference>
<dbReference type="Pfam" id="PF03948">
    <property type="entry name" value="Ribosomal_L9_C"/>
    <property type="match status" value="1"/>
</dbReference>
<dbReference type="Pfam" id="PF01281">
    <property type="entry name" value="Ribosomal_L9_N"/>
    <property type="match status" value="1"/>
</dbReference>
<dbReference type="SUPFAM" id="SSF55658">
    <property type="entry name" value="L9 N-domain-like"/>
    <property type="match status" value="1"/>
</dbReference>
<dbReference type="SUPFAM" id="SSF55653">
    <property type="entry name" value="Ribosomal protein L9 C-domain"/>
    <property type="match status" value="1"/>
</dbReference>
<dbReference type="PROSITE" id="PS00651">
    <property type="entry name" value="RIBOSOMAL_L9"/>
    <property type="match status" value="1"/>
</dbReference>
<evidence type="ECO:0000255" key="1">
    <source>
        <dbReference type="HAMAP-Rule" id="MF_00503"/>
    </source>
</evidence>
<evidence type="ECO:0000305" key="2"/>
<comment type="function">
    <text evidence="1">Binds to the 23S rRNA.</text>
</comment>
<comment type="similarity">
    <text evidence="1">Belongs to the bacterial ribosomal protein bL9 family.</text>
</comment>